<proteinExistence type="inferred from homology"/>
<sequence length="291" mass="32694">MKKIEAWLSKKGLKNKRTLIVVIAFVLFIIFLFLLLNSNSEDSGNITITENAELRTGPNAAYPVIYKVEKGDHFKKIGKVGKWIEVEDTSSNEKGWIAGWHTNLDIVADNTKEKNPLQGKTIVLDPGHGGSDQGASSNTKYKSLEKDYTLKTAKELQRTLEKEGATVKMTRTDDTYVSLENRDIKGDAYLSIHNDALESSNANGMTVYWYHDNQRALADTLDATIQKKGLLSNRGSRQENYQVLRQTKVPAVLLELGYISNPTDETMIKDQLHRQILEQAIVDGLKIYFSA</sequence>
<reference key="1">
    <citation type="journal article" date="2002" name="Lancet">
        <title>Genome and virulence determinants of high virulence community-acquired MRSA.</title>
        <authorList>
            <person name="Baba T."/>
            <person name="Takeuchi F."/>
            <person name="Kuroda M."/>
            <person name="Yuzawa H."/>
            <person name="Aoki K."/>
            <person name="Oguchi A."/>
            <person name="Nagai Y."/>
            <person name="Iwama N."/>
            <person name="Asano K."/>
            <person name="Naimi T."/>
            <person name="Kuroda H."/>
            <person name="Cui L."/>
            <person name="Yamamoto K."/>
            <person name="Hiramatsu K."/>
        </authorList>
    </citation>
    <scope>NUCLEOTIDE SEQUENCE [LARGE SCALE GENOMIC DNA]</scope>
    <source>
        <strain>MW2</strain>
    </source>
</reference>
<organism>
    <name type="scientific">Staphylococcus aureus (strain MW2)</name>
    <dbReference type="NCBI Taxonomy" id="196620"/>
    <lineage>
        <taxon>Bacteria</taxon>
        <taxon>Bacillati</taxon>
        <taxon>Bacillota</taxon>
        <taxon>Bacilli</taxon>
        <taxon>Bacillales</taxon>
        <taxon>Staphylococcaceae</taxon>
        <taxon>Staphylococcus</taxon>
    </lineage>
</organism>
<accession>Q7A0Q6</accession>
<keyword id="KW-0961">Cell wall biogenesis/degradation</keyword>
<keyword id="KW-0378">Hydrolase</keyword>
<keyword id="KW-0964">Secreted</keyword>
<keyword id="KW-0732">Signal</keyword>
<name>LYTH_STAAW</name>
<evidence type="ECO:0000250" key="1"/>
<evidence type="ECO:0000255" key="2"/>
<evidence type="ECO:0000255" key="3">
    <source>
        <dbReference type="PROSITE-ProRule" id="PRU01117"/>
    </source>
</evidence>
<evidence type="ECO:0000256" key="4">
    <source>
        <dbReference type="SAM" id="MobiDB-lite"/>
    </source>
</evidence>
<evidence type="ECO:0000305" key="5"/>
<dbReference type="EC" id="3.5.1.-"/>
<dbReference type="EMBL" id="BA000033">
    <property type="protein sequence ID" value="BAB95447.1"/>
    <property type="molecule type" value="Genomic_DNA"/>
</dbReference>
<dbReference type="RefSeq" id="WP_000717800.1">
    <property type="nucleotide sequence ID" value="NC_003923.1"/>
</dbReference>
<dbReference type="SMR" id="Q7A0Q6"/>
<dbReference type="KEGG" id="sam:MW1582"/>
<dbReference type="HOGENOM" id="CLU_014322_1_1_9"/>
<dbReference type="GO" id="GO:0005576">
    <property type="term" value="C:extracellular region"/>
    <property type="evidence" value="ECO:0007669"/>
    <property type="project" value="UniProtKB-SubCell"/>
</dbReference>
<dbReference type="GO" id="GO:0030288">
    <property type="term" value="C:outer membrane-bounded periplasmic space"/>
    <property type="evidence" value="ECO:0007669"/>
    <property type="project" value="TreeGrafter"/>
</dbReference>
<dbReference type="GO" id="GO:0008745">
    <property type="term" value="F:N-acetylmuramoyl-L-alanine amidase activity"/>
    <property type="evidence" value="ECO:0007669"/>
    <property type="project" value="InterPro"/>
</dbReference>
<dbReference type="GO" id="GO:0071555">
    <property type="term" value="P:cell wall organization"/>
    <property type="evidence" value="ECO:0007669"/>
    <property type="project" value="UniProtKB-KW"/>
</dbReference>
<dbReference type="GO" id="GO:0009253">
    <property type="term" value="P:peptidoglycan catabolic process"/>
    <property type="evidence" value="ECO:0007669"/>
    <property type="project" value="InterPro"/>
</dbReference>
<dbReference type="CDD" id="cd02696">
    <property type="entry name" value="MurNAc-LAA"/>
    <property type="match status" value="1"/>
</dbReference>
<dbReference type="Gene3D" id="2.30.30.40">
    <property type="entry name" value="SH3 Domains"/>
    <property type="match status" value="1"/>
</dbReference>
<dbReference type="Gene3D" id="3.40.630.40">
    <property type="entry name" value="Zn-dependent exopeptidases"/>
    <property type="match status" value="1"/>
</dbReference>
<dbReference type="InterPro" id="IPR017273">
    <property type="entry name" value="LytH"/>
</dbReference>
<dbReference type="InterPro" id="IPR002508">
    <property type="entry name" value="MurNAc-LAA_cat"/>
</dbReference>
<dbReference type="InterPro" id="IPR050695">
    <property type="entry name" value="N-acetylmuramoyl_amidase_3"/>
</dbReference>
<dbReference type="InterPro" id="IPR003646">
    <property type="entry name" value="SH3-like_bac-type"/>
</dbReference>
<dbReference type="PANTHER" id="PTHR30404:SF7">
    <property type="entry name" value="CELL WALL AMIDASE LYTH-RELATED"/>
    <property type="match status" value="1"/>
</dbReference>
<dbReference type="PANTHER" id="PTHR30404">
    <property type="entry name" value="N-ACETYLMURAMOYL-L-ALANINE AMIDASE"/>
    <property type="match status" value="1"/>
</dbReference>
<dbReference type="Pfam" id="PF01520">
    <property type="entry name" value="Amidase_3"/>
    <property type="match status" value="1"/>
</dbReference>
<dbReference type="Pfam" id="PF08239">
    <property type="entry name" value="SH3_3"/>
    <property type="match status" value="1"/>
</dbReference>
<dbReference type="PIRSF" id="PIRSF037730">
    <property type="entry name" value="CWA_LytH_prd"/>
    <property type="match status" value="1"/>
</dbReference>
<dbReference type="SMART" id="SM00646">
    <property type="entry name" value="Ami_3"/>
    <property type="match status" value="1"/>
</dbReference>
<dbReference type="SMART" id="SM00287">
    <property type="entry name" value="SH3b"/>
    <property type="match status" value="1"/>
</dbReference>
<dbReference type="SUPFAM" id="SSF53187">
    <property type="entry name" value="Zn-dependent exopeptidases"/>
    <property type="match status" value="1"/>
</dbReference>
<dbReference type="PROSITE" id="PS51781">
    <property type="entry name" value="SH3B"/>
    <property type="match status" value="1"/>
</dbReference>
<protein>
    <recommendedName>
        <fullName>Probable cell wall amidase LytH</fullName>
        <ecNumber>3.5.1.-</ecNumber>
    </recommendedName>
</protein>
<gene>
    <name type="primary">lytH</name>
    <name type="ordered locus">MW1582</name>
</gene>
<feature type="signal peptide" evidence="2">
    <location>
        <begin position="1"/>
        <end position="40"/>
    </location>
</feature>
<feature type="chain" id="PRO_0000226285" description="Probable cell wall amidase LytH">
    <location>
        <begin position="41"/>
        <end position="291"/>
    </location>
</feature>
<feature type="domain" description="SH3b" evidence="3">
    <location>
        <begin position="41"/>
        <end position="105"/>
    </location>
</feature>
<feature type="domain" description="MurNAc-LAA" evidence="2">
    <location>
        <begin position="122"/>
        <end position="286"/>
    </location>
</feature>
<feature type="region of interest" description="Disordered" evidence="4">
    <location>
        <begin position="118"/>
        <end position="140"/>
    </location>
</feature>
<comment type="function">
    <text evidence="1">Probably involved in cell-wall metabolism.</text>
</comment>
<comment type="subcellular location">
    <subcellularLocation>
        <location evidence="5">Secreted</location>
    </subcellularLocation>
</comment>
<comment type="similarity">
    <text evidence="5">Belongs to the N-acetylmuramoyl-L-alanine amidase 3 family.</text>
</comment>